<protein>
    <recommendedName>
        <fullName evidence="1">Phosphonoacetaldehyde hydrolase</fullName>
        <shortName evidence="1">Phosphonatase</shortName>
        <ecNumber evidence="1">3.11.1.1</ecNumber>
    </recommendedName>
    <alternativeName>
        <fullName evidence="1">Phosphonoacetaldehyde phosphonohydrolase</fullName>
    </alternativeName>
</protein>
<sequence>MNYKNPTHLQAAILDWAGTVVDFGSFAPTQIFVEAFAEFDVEVSIEEARGPMGMGKWDHIRTLCDQPQIAERYRKVFGRTPTDDDVTAIYQRFMPLQIEKIAVHSALIPGALETLTGLRQNGLKIGSCSGYPKVVMDKVVELAAKNGYVADHVVATDETPNGRPWPAQALANVIALGIDDVAACVKVDDTVPGILEGRRAGMWTVALVCSGNALGLTYEGYRALDPNTLEAERKRIHAMFEGSRPHYLIDTINELPGVITDINQRLARGEMPQAV</sequence>
<dbReference type="EC" id="3.11.1.1" evidence="1"/>
<dbReference type="EMBL" id="AJ437001">
    <property type="protein sequence ID" value="CAD24489.1"/>
    <property type="molecule type" value="Genomic_DNA"/>
</dbReference>
<dbReference type="SMR" id="Q8RSQ3"/>
<dbReference type="eggNOG" id="COG0637">
    <property type="taxonomic scope" value="Bacteria"/>
</dbReference>
<dbReference type="BRENDA" id="3.11.1.1">
    <property type="organism ID" value="5092"/>
</dbReference>
<dbReference type="GO" id="GO:0005829">
    <property type="term" value="C:cytosol"/>
    <property type="evidence" value="ECO:0007669"/>
    <property type="project" value="TreeGrafter"/>
</dbReference>
<dbReference type="GO" id="GO:0000287">
    <property type="term" value="F:magnesium ion binding"/>
    <property type="evidence" value="ECO:0007669"/>
    <property type="project" value="UniProtKB-UniRule"/>
</dbReference>
<dbReference type="GO" id="GO:0008967">
    <property type="term" value="F:phosphoglycolate phosphatase activity"/>
    <property type="evidence" value="ECO:0007669"/>
    <property type="project" value="TreeGrafter"/>
</dbReference>
<dbReference type="GO" id="GO:0050194">
    <property type="term" value="F:phosphonoacetaldehyde hydrolase activity"/>
    <property type="evidence" value="ECO:0007669"/>
    <property type="project" value="UniProtKB-UniRule"/>
</dbReference>
<dbReference type="GO" id="GO:0006281">
    <property type="term" value="P:DNA repair"/>
    <property type="evidence" value="ECO:0007669"/>
    <property type="project" value="TreeGrafter"/>
</dbReference>
<dbReference type="GO" id="GO:0019700">
    <property type="term" value="P:organic phosphonate catabolic process"/>
    <property type="evidence" value="ECO:0007669"/>
    <property type="project" value="InterPro"/>
</dbReference>
<dbReference type="CDD" id="cd02586">
    <property type="entry name" value="HAD_PHN"/>
    <property type="match status" value="1"/>
</dbReference>
<dbReference type="FunFam" id="1.10.150.240:FF:000006">
    <property type="entry name" value="Phosphonoacetaldehyde hydrolase"/>
    <property type="match status" value="1"/>
</dbReference>
<dbReference type="Gene3D" id="3.40.50.1000">
    <property type="entry name" value="HAD superfamily/HAD-like"/>
    <property type="match status" value="1"/>
</dbReference>
<dbReference type="Gene3D" id="1.10.150.240">
    <property type="entry name" value="Putative phosphatase, domain 2"/>
    <property type="match status" value="1"/>
</dbReference>
<dbReference type="HAMAP" id="MF_01375">
    <property type="entry name" value="PhnX"/>
    <property type="match status" value="1"/>
</dbReference>
<dbReference type="InterPro" id="IPR050155">
    <property type="entry name" value="HAD-like_hydrolase_sf"/>
</dbReference>
<dbReference type="InterPro" id="IPR036412">
    <property type="entry name" value="HAD-like_sf"/>
</dbReference>
<dbReference type="InterPro" id="IPR006439">
    <property type="entry name" value="HAD-SF_hydro_IA"/>
</dbReference>
<dbReference type="InterPro" id="IPR023214">
    <property type="entry name" value="HAD_sf"/>
</dbReference>
<dbReference type="InterPro" id="IPR023198">
    <property type="entry name" value="PGP-like_dom2"/>
</dbReference>
<dbReference type="InterPro" id="IPR006323">
    <property type="entry name" value="Phosphonoacetald_hydro"/>
</dbReference>
<dbReference type="NCBIfam" id="TIGR01509">
    <property type="entry name" value="HAD-SF-IA-v3"/>
    <property type="match status" value="1"/>
</dbReference>
<dbReference type="NCBIfam" id="TIGR01422">
    <property type="entry name" value="phosphonatase"/>
    <property type="match status" value="1"/>
</dbReference>
<dbReference type="PANTHER" id="PTHR43434">
    <property type="entry name" value="PHOSPHOGLYCOLATE PHOSPHATASE"/>
    <property type="match status" value="1"/>
</dbReference>
<dbReference type="PANTHER" id="PTHR43434:SF19">
    <property type="entry name" value="PHOSPHONOACETALDEHYDE HYDROLASE"/>
    <property type="match status" value="1"/>
</dbReference>
<dbReference type="Pfam" id="PF00702">
    <property type="entry name" value="Hydrolase"/>
    <property type="match status" value="1"/>
</dbReference>
<dbReference type="SFLD" id="SFLDS00003">
    <property type="entry name" value="Haloacid_Dehalogenase"/>
    <property type="match status" value="1"/>
</dbReference>
<dbReference type="SFLD" id="SFLDF00038">
    <property type="entry name" value="phosphonoacetaldehyde_hydrolas"/>
    <property type="match status" value="1"/>
</dbReference>
<dbReference type="SUPFAM" id="SSF56784">
    <property type="entry name" value="HAD-like"/>
    <property type="match status" value="1"/>
</dbReference>
<accession>Q8RSQ3</accession>
<reference key="1">
    <citation type="submission" date="2002-02" db="EMBL/GenBank/DDBJ databases">
        <title>Nucleotide and derived amino acid sequence of the phosphate insensitive phosphonatase operon from Pseudomonas putida NG2.</title>
        <authorList>
            <person name="Quinn D.J."/>
            <person name="Quinn J.P."/>
            <person name="Wallace A."/>
        </authorList>
    </citation>
    <scope>NUCLEOTIDE SEQUENCE [GENOMIC DNA]</scope>
    <source>
        <strain>NG2</strain>
    </source>
</reference>
<name>PHNX_PSEPU</name>
<gene>
    <name evidence="1" type="primary">phnX</name>
</gene>
<feature type="chain" id="PRO_5000068292" description="Phosphonoacetaldehyde hydrolase">
    <location>
        <begin position="1"/>
        <end position="275"/>
    </location>
</feature>
<feature type="active site" description="Nucleophile" evidence="1">
    <location>
        <position position="15"/>
    </location>
</feature>
<feature type="active site" description="Schiff-base intermediate with substrate" evidence="1">
    <location>
        <position position="56"/>
    </location>
</feature>
<feature type="binding site" evidence="1">
    <location>
        <position position="15"/>
    </location>
    <ligand>
        <name>Mg(2+)</name>
        <dbReference type="ChEBI" id="CHEBI:18420"/>
    </ligand>
</feature>
<feature type="binding site" evidence="1">
    <location>
        <position position="17"/>
    </location>
    <ligand>
        <name>Mg(2+)</name>
        <dbReference type="ChEBI" id="CHEBI:18420"/>
    </ligand>
</feature>
<feature type="binding site" evidence="1">
    <location>
        <position position="189"/>
    </location>
    <ligand>
        <name>Mg(2+)</name>
        <dbReference type="ChEBI" id="CHEBI:18420"/>
    </ligand>
</feature>
<organism>
    <name type="scientific">Pseudomonas putida</name>
    <name type="common">Arthrobacter siderocapsulatus</name>
    <dbReference type="NCBI Taxonomy" id="303"/>
    <lineage>
        <taxon>Bacteria</taxon>
        <taxon>Pseudomonadati</taxon>
        <taxon>Pseudomonadota</taxon>
        <taxon>Gammaproteobacteria</taxon>
        <taxon>Pseudomonadales</taxon>
        <taxon>Pseudomonadaceae</taxon>
        <taxon>Pseudomonas</taxon>
    </lineage>
</organism>
<evidence type="ECO:0000255" key="1">
    <source>
        <dbReference type="HAMAP-Rule" id="MF_01375"/>
    </source>
</evidence>
<keyword id="KW-0378">Hydrolase</keyword>
<keyword id="KW-0460">Magnesium</keyword>
<keyword id="KW-0479">Metal-binding</keyword>
<keyword id="KW-0704">Schiff base</keyword>
<proteinExistence type="inferred from homology"/>
<comment type="function">
    <text evidence="1">Involved in phosphonate degradation.</text>
</comment>
<comment type="catalytic activity">
    <reaction evidence="1">
        <text>phosphonoacetaldehyde + H2O = acetaldehyde + phosphate + H(+)</text>
        <dbReference type="Rhea" id="RHEA:18905"/>
        <dbReference type="ChEBI" id="CHEBI:15343"/>
        <dbReference type="ChEBI" id="CHEBI:15377"/>
        <dbReference type="ChEBI" id="CHEBI:15378"/>
        <dbReference type="ChEBI" id="CHEBI:43474"/>
        <dbReference type="ChEBI" id="CHEBI:58383"/>
        <dbReference type="EC" id="3.11.1.1"/>
    </reaction>
</comment>
<comment type="cofactor">
    <cofactor evidence="1">
        <name>Mg(2+)</name>
        <dbReference type="ChEBI" id="CHEBI:18420"/>
    </cofactor>
    <text evidence="1">Binds 1 Mg(2+) ion per subunit.</text>
</comment>
<comment type="subunit">
    <text evidence="1">Homodimer.</text>
</comment>
<comment type="similarity">
    <text evidence="1">Belongs to the HAD-like hydrolase superfamily. PhnX family.</text>
</comment>